<gene>
    <name type="primary">fasE</name>
</gene>
<name>FASE_ECOLX</name>
<proteinExistence type="predicted"/>
<accession>P46001</accession>
<organism>
    <name type="scientific">Escherichia coli</name>
    <dbReference type="NCBI Taxonomy" id="562"/>
    <lineage>
        <taxon>Bacteria</taxon>
        <taxon>Pseudomonadati</taxon>
        <taxon>Pseudomonadota</taxon>
        <taxon>Gammaproteobacteria</taxon>
        <taxon>Enterobacterales</taxon>
        <taxon>Enterobacteriaceae</taxon>
        <taxon>Escherichia</taxon>
    </lineage>
</organism>
<sequence>MKYLFTILLIFICKYGYTFVSNPLLYPFPNDTKIIIHSEGNGKIKKGILKITNPGESPWIVQSWTEGSEGKKTAVYPALARIEAKSSLVLKIYPQPNDKDKSEWMVVLFIPPDSLRKPSELTIPIAYRLKII</sequence>
<reference key="1">
    <citation type="submission" date="1996-03" db="EMBL/GenBank/DDBJ databases">
        <authorList>
            <person name="Schifferli D.M."/>
        </authorList>
    </citation>
    <scope>NUCLEOTIDE SEQUENCE [GENOMIC DNA]</scope>
    <source>
        <strain>987 / ETEC</strain>
    </source>
</reference>
<reference key="2">
    <citation type="journal article" date="1994" name="J. Bacteriol.">
        <title>Permissive linker insertion sites in the outer membrane protein of 987P fimbriae of Escherichia coli.</title>
        <authorList>
            <person name="Schifferli D.M."/>
            <person name="Alrutz M.A."/>
        </authorList>
    </citation>
    <scope>NUCLEOTIDE SEQUENCE [GENOMIC DNA] OF 1-59</scope>
    <source>
        <strain>987 / ETEC</strain>
    </source>
</reference>
<dbReference type="EMBL" id="U50547">
    <property type="protein sequence ID" value="AAB02688.1"/>
    <property type="molecule type" value="Genomic_DNA"/>
</dbReference>
<dbReference type="EMBL" id="L22659">
    <property type="protein sequence ID" value="AAA21828.1"/>
    <property type="molecule type" value="Genomic_DNA"/>
</dbReference>
<dbReference type="SMR" id="P46001"/>
<dbReference type="GO" id="GO:0030288">
    <property type="term" value="C:outer membrane-bounded periplasmic space"/>
    <property type="evidence" value="ECO:0007669"/>
    <property type="project" value="InterPro"/>
</dbReference>
<dbReference type="GO" id="GO:0071555">
    <property type="term" value="P:cell wall organization"/>
    <property type="evidence" value="ECO:0007669"/>
    <property type="project" value="InterPro"/>
</dbReference>
<dbReference type="Gene3D" id="2.60.40.10">
    <property type="entry name" value="Immunoglobulins"/>
    <property type="match status" value="1"/>
</dbReference>
<dbReference type="InterPro" id="IPR013783">
    <property type="entry name" value="Ig-like_fold"/>
</dbReference>
<dbReference type="InterPro" id="IPR008962">
    <property type="entry name" value="PapD-like_sf"/>
</dbReference>
<dbReference type="InterPro" id="IPR016147">
    <property type="entry name" value="Pili_assmbl_chaperone_N"/>
</dbReference>
<dbReference type="Pfam" id="PF00345">
    <property type="entry name" value="PapD_N"/>
    <property type="match status" value="1"/>
</dbReference>
<dbReference type="SUPFAM" id="SSF49354">
    <property type="entry name" value="PapD-like"/>
    <property type="match status" value="1"/>
</dbReference>
<protein>
    <recommendedName>
        <fullName>Protein FasE</fullName>
    </recommendedName>
</protein>
<feature type="chain" id="PRO_0000087195" description="Protein FasE">
    <location>
        <begin position="1"/>
        <end position="132"/>
    </location>
</feature>